<accession>Q8XPV7</accession>
<feature type="chain" id="PRO_0000067280" description="2-oxoglutarate-dependent ethylene/succinate-forming enzyme">
    <location>
        <begin position="1"/>
        <end position="345"/>
    </location>
</feature>
<feature type="domain" description="Fe2OG dioxygenase" evidence="2">
    <location>
        <begin position="167"/>
        <end position="288"/>
    </location>
</feature>
<feature type="binding site" evidence="2">
    <location>
        <position position="191"/>
    </location>
    <ligand>
        <name>Fe cation</name>
        <dbReference type="ChEBI" id="CHEBI:24875"/>
    </ligand>
</feature>
<feature type="binding site" evidence="2">
    <location>
        <position position="270"/>
    </location>
    <ligand>
        <name>Fe cation</name>
        <dbReference type="ChEBI" id="CHEBI:24875"/>
    </ligand>
</feature>
<keyword id="KW-0223">Dioxygenase</keyword>
<keyword id="KW-0266">Ethylene biosynthesis</keyword>
<keyword id="KW-0408">Iron</keyword>
<keyword id="KW-0479">Metal-binding</keyword>
<keyword id="KW-0560">Oxidoreductase</keyword>
<keyword id="KW-0614">Plasmid</keyword>
<keyword id="KW-1185">Reference proteome</keyword>
<evidence type="ECO:0000250" key="1"/>
<evidence type="ECO:0000255" key="2">
    <source>
        <dbReference type="PROSITE-ProRule" id="PRU00805"/>
    </source>
</evidence>
<evidence type="ECO:0000305" key="3"/>
<gene>
    <name type="primary">efe</name>
    <name type="ordered locus">RSp1529</name>
    <name type="ORF">RS04806</name>
</gene>
<dbReference type="EC" id="1.13.12.19"/>
<dbReference type="EC" id="1.14.20.7"/>
<dbReference type="EMBL" id="AL646053">
    <property type="protein sequence ID" value="CAD18680.1"/>
    <property type="molecule type" value="Genomic_DNA"/>
</dbReference>
<dbReference type="RefSeq" id="WP_011004776.1">
    <property type="nucleotide sequence ID" value="NC_003296.1"/>
</dbReference>
<dbReference type="SMR" id="Q8XPV7"/>
<dbReference type="STRING" id="267608.RSp1529"/>
<dbReference type="EnsemblBacteria" id="CAD18680">
    <property type="protein sequence ID" value="CAD18680"/>
    <property type="gene ID" value="RSp1529"/>
</dbReference>
<dbReference type="KEGG" id="rso:RSp1529"/>
<dbReference type="PATRIC" id="fig|267608.8.peg.5009"/>
<dbReference type="eggNOG" id="COG3491">
    <property type="taxonomic scope" value="Bacteria"/>
</dbReference>
<dbReference type="HOGENOM" id="CLU_045863_0_0_4"/>
<dbReference type="BRENDA" id="1.13.12.19">
    <property type="organism ID" value="5176"/>
</dbReference>
<dbReference type="UniPathway" id="UPA00385"/>
<dbReference type="Proteomes" id="UP000001436">
    <property type="component" value="Plasmid megaplasmid Rsp"/>
</dbReference>
<dbReference type="GO" id="GO:0102276">
    <property type="term" value="F:2-oxoglutarate oxygenase/decarboxylase (ethylene-forming) activity"/>
    <property type="evidence" value="ECO:0007669"/>
    <property type="project" value="UniProtKB-EC"/>
</dbReference>
<dbReference type="GO" id="GO:0051213">
    <property type="term" value="F:dioxygenase activity"/>
    <property type="evidence" value="ECO:0007669"/>
    <property type="project" value="UniProtKB-KW"/>
</dbReference>
<dbReference type="GO" id="GO:0046872">
    <property type="term" value="F:metal ion binding"/>
    <property type="evidence" value="ECO:0007669"/>
    <property type="project" value="UniProtKB-KW"/>
</dbReference>
<dbReference type="GO" id="GO:0009693">
    <property type="term" value="P:ethylene biosynthetic process"/>
    <property type="evidence" value="ECO:0007669"/>
    <property type="project" value="UniProtKB-UniPathway"/>
</dbReference>
<dbReference type="Gene3D" id="2.60.120.330">
    <property type="entry name" value="B-lactam Antibiotic, Isopenicillin N Synthase, Chain"/>
    <property type="match status" value="1"/>
</dbReference>
<dbReference type="InterPro" id="IPR026992">
    <property type="entry name" value="DIOX_N"/>
</dbReference>
<dbReference type="InterPro" id="IPR044861">
    <property type="entry name" value="IPNS-like_FE2OG_OXY"/>
</dbReference>
<dbReference type="InterPro" id="IPR027443">
    <property type="entry name" value="IPNS-like_sf"/>
</dbReference>
<dbReference type="InterPro" id="IPR050231">
    <property type="entry name" value="Iron_ascorbate_oxido_reductase"/>
</dbReference>
<dbReference type="InterPro" id="IPR005123">
    <property type="entry name" value="Oxoglu/Fe-dep_dioxygenase_dom"/>
</dbReference>
<dbReference type="PANTHER" id="PTHR47990">
    <property type="entry name" value="2-OXOGLUTARATE (2OG) AND FE(II)-DEPENDENT OXYGENASE SUPERFAMILY PROTEIN-RELATED"/>
    <property type="match status" value="1"/>
</dbReference>
<dbReference type="Pfam" id="PF03171">
    <property type="entry name" value="2OG-FeII_Oxy"/>
    <property type="match status" value="1"/>
</dbReference>
<dbReference type="Pfam" id="PF14226">
    <property type="entry name" value="DIOX_N"/>
    <property type="match status" value="1"/>
</dbReference>
<dbReference type="SUPFAM" id="SSF51197">
    <property type="entry name" value="Clavaminate synthase-like"/>
    <property type="match status" value="1"/>
</dbReference>
<dbReference type="PROSITE" id="PS51471">
    <property type="entry name" value="FE2OG_OXY"/>
    <property type="match status" value="1"/>
</dbReference>
<name>EFE_RALN1</name>
<geneLocation type="plasmid">
    <name>megaplasmid Rsp</name>
</geneLocation>
<reference key="1">
    <citation type="journal article" date="2002" name="Nature">
        <title>Genome sequence of the plant pathogen Ralstonia solanacearum.</title>
        <authorList>
            <person name="Salanoubat M."/>
            <person name="Genin S."/>
            <person name="Artiguenave F."/>
            <person name="Gouzy J."/>
            <person name="Mangenot S."/>
            <person name="Arlat M."/>
            <person name="Billault A."/>
            <person name="Brottier P."/>
            <person name="Camus J.-C."/>
            <person name="Cattolico L."/>
            <person name="Chandler M."/>
            <person name="Choisne N."/>
            <person name="Claudel-Renard C."/>
            <person name="Cunnac S."/>
            <person name="Demange N."/>
            <person name="Gaspin C."/>
            <person name="Lavie M."/>
            <person name="Moisan A."/>
            <person name="Robert C."/>
            <person name="Saurin W."/>
            <person name="Schiex T."/>
            <person name="Siguier P."/>
            <person name="Thebault P."/>
            <person name="Whalen M."/>
            <person name="Wincker P."/>
            <person name="Levy M."/>
            <person name="Weissenbach J."/>
            <person name="Boucher C.A."/>
        </authorList>
    </citation>
    <scope>NUCLEOTIDE SEQUENCE [LARGE SCALE GENOMIC DNA]</scope>
    <source>
        <strain>ATCC BAA-1114 / GMI1000</strain>
    </source>
</reference>
<protein>
    <recommendedName>
        <fullName>2-oxoglutarate-dependent ethylene/succinate-forming enzyme</fullName>
        <shortName>EFE</shortName>
        <shortName>Ethylene-forming enzyme</shortName>
        <ecNumber>1.13.12.19</ecNumber>
        <ecNumber>1.14.20.7</ecNumber>
    </recommendedName>
    <alternativeName>
        <fullName>2-oxoglutarate dioxygenase (ethylene-forming)</fullName>
    </alternativeName>
    <alternativeName>
        <fullName>2-oxoglutarate/L-arginine monooxygenase/decarboxylase (succinate-forming)</fullName>
    </alternativeName>
</protein>
<comment type="function">
    <text evidence="1">Simultaneously catalyzes two reactions, namely formation of ethylene and of succinate from 2-oxoglutarate.</text>
</comment>
<comment type="catalytic activity">
    <reaction>
        <text>2-oxoglutarate + O2 + 2 H(+) = ethene + 3 CO2 + H2O</text>
        <dbReference type="Rhea" id="RHEA:31523"/>
        <dbReference type="ChEBI" id="CHEBI:15377"/>
        <dbReference type="ChEBI" id="CHEBI:15378"/>
        <dbReference type="ChEBI" id="CHEBI:15379"/>
        <dbReference type="ChEBI" id="CHEBI:16526"/>
        <dbReference type="ChEBI" id="CHEBI:16810"/>
        <dbReference type="ChEBI" id="CHEBI:18153"/>
        <dbReference type="EC" id="1.13.12.19"/>
    </reaction>
</comment>
<comment type="catalytic activity">
    <reaction>
        <text>L-arginine + 2-oxoglutarate + O2 = guanidine + L-glutamate 5-semialdehyde + succinate + CO2</text>
        <dbReference type="Rhea" id="RHEA:31535"/>
        <dbReference type="ChEBI" id="CHEBI:15379"/>
        <dbReference type="ChEBI" id="CHEBI:16526"/>
        <dbReference type="ChEBI" id="CHEBI:16810"/>
        <dbReference type="ChEBI" id="CHEBI:30031"/>
        <dbReference type="ChEBI" id="CHEBI:30087"/>
        <dbReference type="ChEBI" id="CHEBI:32682"/>
        <dbReference type="ChEBI" id="CHEBI:58066"/>
        <dbReference type="EC" id="1.14.20.7"/>
    </reaction>
</comment>
<comment type="cofactor">
    <cofactor evidence="1">
        <name>Fe(2+)</name>
        <dbReference type="ChEBI" id="CHEBI:29033"/>
    </cofactor>
</comment>
<comment type="pathway">
    <text>Alkene biosynthesis; ethylene biosynthesis via 2-oxoglutarate.</text>
</comment>
<comment type="subunit">
    <text evidence="1">Monomer.</text>
</comment>
<comment type="miscellaneous">
    <text>A dual-circuit mechanism has been proposed in P.syringae pv phaseolicola for the complete reaction, in which the binding of L-arginine and 2-oxoglutarate in a Schiff-base structure generates a common intermediate for the two reactions.</text>
</comment>
<comment type="similarity">
    <text evidence="3">Belongs to the iron/ascorbate-dependent oxidoreductase family.</text>
</comment>
<organism>
    <name type="scientific">Ralstonia nicotianae (strain ATCC BAA-1114 / GMI1000)</name>
    <name type="common">Ralstonia solanacearum</name>
    <dbReference type="NCBI Taxonomy" id="267608"/>
    <lineage>
        <taxon>Bacteria</taxon>
        <taxon>Pseudomonadati</taxon>
        <taxon>Pseudomonadota</taxon>
        <taxon>Betaproteobacteria</taxon>
        <taxon>Burkholderiales</taxon>
        <taxon>Burkholderiaceae</taxon>
        <taxon>Ralstonia</taxon>
        <taxon>Ralstonia solanacearum species complex</taxon>
    </lineage>
</organism>
<proteinExistence type="inferred from homology"/>
<sequence length="345" mass="39206">MTDLTTFHLPERITNTEAHRELGQAMVKAWRTDGIFQITLSKPQEQTTDEAFAESRQFFSQDFETKSRHVSALTYSGYIASREEVTAGEADYSEIFTICPDIGLEDARVRENLPCHGPVPWPGAAYRDRMKAFMGMLGTFGERLLQLIALGLDLDDMDTFTRLTQDGWHHMRVLRFPTVQSSENARGIGAHTDYGMLVIAAQDDVGGLYVRPPIEGERRNRNWLPSESTAGVYEHDDGWNFIKPMPAVLTVFPGDFLQFLTGGHLLSTPHKVRLNTRERFAMAYFHEPNFDAWVEPLEADAAVAPIHYGTHFTNMFMRCYPKRITTRRIMENGLLDKLPTLSELA</sequence>